<protein>
    <recommendedName>
        <fullName>Receptor-type tyrosine-protein kinase FLT3</fullName>
        <ecNumber>2.7.10.1</ecNumber>
    </recommendedName>
    <alternativeName>
        <fullName>FL cytokine receptor</fullName>
    </alternativeName>
    <alternativeName>
        <fullName>Fetal liver kinase 2</fullName>
        <shortName>FLK-2</shortName>
    </alternativeName>
    <alternativeName>
        <fullName>Fms-like tyrosine kinase 3</fullName>
        <shortName>FLT-3</shortName>
    </alternativeName>
    <alternativeName>
        <fullName>Tyrosine-protein kinase receptor flk-2</fullName>
    </alternativeName>
    <cdAntigenName>CD135</cdAntigenName>
</protein>
<name>FLT3_MOUSE</name>
<feature type="signal peptide" evidence="3">
    <location>
        <begin position="1"/>
        <end position="27"/>
    </location>
</feature>
<feature type="chain" id="PRO_0000016779" description="Receptor-type tyrosine-protein kinase FLT3">
    <location>
        <begin position="28"/>
        <end position="1000"/>
    </location>
</feature>
<feature type="topological domain" description="Extracellular" evidence="3">
    <location>
        <begin position="28"/>
        <end position="544"/>
    </location>
</feature>
<feature type="transmembrane region" description="Helical" evidence="3">
    <location>
        <begin position="545"/>
        <end position="564"/>
    </location>
</feature>
<feature type="topological domain" description="Cytoplasmic" evidence="3">
    <location>
        <begin position="565"/>
        <end position="992"/>
    </location>
</feature>
<feature type="domain" description="Ig-like C2-type">
    <location>
        <begin position="254"/>
        <end position="344"/>
    </location>
</feature>
<feature type="domain" description="Protein kinase" evidence="5">
    <location>
        <begin position="611"/>
        <end position="946"/>
    </location>
</feature>
<feature type="region of interest" description="Disordered" evidence="7">
    <location>
        <begin position="45"/>
        <end position="67"/>
    </location>
</feature>
<feature type="region of interest" description="Important for normal regulation of the kinase activity and for maintaining the kinase in an inactive state in the absence of ligand binding" evidence="1">
    <location>
        <begin position="592"/>
        <end position="598"/>
    </location>
</feature>
<feature type="region of interest" description="Disordered" evidence="7">
    <location>
        <begin position="968"/>
        <end position="1000"/>
    </location>
</feature>
<feature type="active site" description="Proton acceptor" evidence="5 6">
    <location>
        <position position="814"/>
    </location>
</feature>
<feature type="binding site" evidence="5">
    <location>
        <begin position="617"/>
        <end position="625"/>
    </location>
    <ligand>
        <name>ATP</name>
        <dbReference type="ChEBI" id="CHEBI:30616"/>
    </ligand>
</feature>
<feature type="binding site" evidence="5">
    <location>
        <position position="645"/>
    </location>
    <ligand>
        <name>ATP</name>
        <dbReference type="ChEBI" id="CHEBI:30616"/>
    </ligand>
</feature>
<feature type="modified residue" description="Phosphotyrosine" evidence="2">
    <location>
        <position position="573"/>
    </location>
</feature>
<feature type="modified residue" description="Phosphoserine" evidence="2">
    <location>
        <position position="575"/>
    </location>
</feature>
<feature type="modified residue" description="Phosphotyrosine; by autocatalysis" evidence="2">
    <location>
        <position position="590"/>
    </location>
</feature>
<feature type="modified residue" description="Phosphotyrosine; by autocatalysis" evidence="2">
    <location>
        <position position="592"/>
    </location>
</feature>
<feature type="modified residue" description="Phosphotyrosine" evidence="2">
    <location>
        <position position="600"/>
    </location>
</feature>
<feature type="modified residue" description="Phosphotyrosine; by autocatalysis" evidence="2">
    <location>
        <position position="727"/>
    </location>
</feature>
<feature type="modified residue" description="Phosphoserine" evidence="2">
    <location>
        <position position="760"/>
    </location>
</feature>
<feature type="modified residue" description="Phosphotyrosine" evidence="2">
    <location>
        <position position="769"/>
    </location>
</feature>
<feature type="modified residue" description="Phosphotyrosine" evidence="2">
    <location>
        <position position="796"/>
    </location>
</feature>
<feature type="modified residue" description="Phosphotyrosine; by autocatalysis" evidence="2">
    <location>
        <position position="845"/>
    </location>
</feature>
<feature type="modified residue" description="Phosphotyrosine" evidence="2">
    <location>
        <position position="958"/>
    </location>
</feature>
<feature type="modified residue" description="Phosphotyrosine" evidence="2">
    <location>
        <position position="972"/>
    </location>
</feature>
<feature type="modified residue" description="Phosphoserine" evidence="2">
    <location>
        <position position="1000"/>
    </location>
</feature>
<feature type="glycosylation site" description="N-linked (GlcNAc...) asparagine" evidence="3">
    <location>
        <position position="44"/>
    </location>
</feature>
<feature type="glycosylation site" description="N-linked (GlcNAc...) asparagine" evidence="3">
    <location>
        <position position="133"/>
    </location>
</feature>
<feature type="glycosylation site" description="N-linked (GlcNAc...) asparagine" evidence="3">
    <location>
        <position position="152"/>
    </location>
</feature>
<feature type="glycosylation site" description="N-linked (GlcNAc...) asparagine" evidence="3">
    <location>
        <position position="307"/>
    </location>
</feature>
<feature type="glycosylation site" description="N-linked (GlcNAc...) asparagine" evidence="3">
    <location>
        <position position="324"/>
    </location>
</feature>
<feature type="glycosylation site" description="N-linked (GlcNAc...) asparagine" evidence="3">
    <location>
        <position position="352"/>
    </location>
</feature>
<feature type="glycosylation site" description="N-linked (GlcNAc...) asparagine" evidence="3">
    <location>
        <position position="445"/>
    </location>
</feature>
<feature type="glycosylation site" description="N-linked (GlcNAc...) asparagine" evidence="3">
    <location>
        <position position="474"/>
    </location>
</feature>
<feature type="glycosylation site" description="N-linked (GlcNAc...) asparagine" evidence="3">
    <location>
        <position position="503"/>
    </location>
</feature>
<feature type="glycosylation site" description="N-linked (GlcNAc...) asparagine" evidence="3">
    <location>
        <position position="542"/>
    </location>
</feature>
<feature type="disulfide bond" evidence="4">
    <location>
        <begin position="36"/>
        <end position="66"/>
    </location>
</feature>
<feature type="disulfide bond" evidence="4">
    <location>
        <begin position="104"/>
        <end position="115"/>
    </location>
</feature>
<feature type="disulfide bond" evidence="4">
    <location>
        <begin position="200"/>
        <end position="207"/>
    </location>
</feature>
<feature type="disulfide bond" evidence="4">
    <location>
        <begin position="273"/>
        <end position="331"/>
    </location>
</feature>
<feature type="disulfide bond" evidence="4">
    <location>
        <begin position="369"/>
        <end position="408"/>
    </location>
</feature>
<feature type="disulfide bond" evidence="4">
    <location>
        <begin position="382"/>
        <end position="393"/>
    </location>
</feature>
<feature type="mutagenesis site" description="Loss of kinase activity; no effect on FIZ1-binding." evidence="8">
    <original>K</original>
    <variation>A</variation>
    <location>
        <position position="645"/>
    </location>
</feature>
<feature type="sequence conflict" description="In Ref. 1; AAA37634." evidence="16" ref="1">
    <original>A</original>
    <variation>R</variation>
    <location>
        <position position="150"/>
    </location>
</feature>
<feature type="sequence conflict" description="In Ref. 1; AAA37634." evidence="16" ref="1">
    <original>S</original>
    <variation>C</variation>
    <location>
        <position position="242"/>
    </location>
</feature>
<feature type="sequence conflict" description="In Ref. 1; AAA37634." evidence="16" ref="1">
    <original>F</original>
    <variation>S</variation>
    <location>
        <position position="726"/>
    </location>
</feature>
<feature type="sequence conflict" description="In Ref. 1; AAA37634." evidence="16" ref="1">
    <original>MYQNMGGNVPEHPSIYQNRRPLSREAGSEPPSPQA</original>
    <variation>CIRTSIHLPKQAAPQQRGGLRAQSPQR</variation>
    <location>
        <begin position="957"/>
        <end position="991"/>
    </location>
</feature>
<accession>Q00342</accession>
<keyword id="KW-0067">ATP-binding</keyword>
<keyword id="KW-1015">Disulfide bond</keyword>
<keyword id="KW-0256">Endoplasmic reticulum</keyword>
<keyword id="KW-0325">Glycoprotein</keyword>
<keyword id="KW-0393">Immunoglobulin domain</keyword>
<keyword id="KW-0418">Kinase</keyword>
<keyword id="KW-0472">Membrane</keyword>
<keyword id="KW-0547">Nucleotide-binding</keyword>
<keyword id="KW-0597">Phosphoprotein</keyword>
<keyword id="KW-0656">Proto-oncogene</keyword>
<keyword id="KW-0675">Receptor</keyword>
<keyword id="KW-1185">Reference proteome</keyword>
<keyword id="KW-0732">Signal</keyword>
<keyword id="KW-0808">Transferase</keyword>
<keyword id="KW-0812">Transmembrane</keyword>
<keyword id="KW-1133">Transmembrane helix</keyword>
<keyword id="KW-0829">Tyrosine-protein kinase</keyword>
<keyword id="KW-0832">Ubl conjugation</keyword>
<organism>
    <name type="scientific">Mus musculus</name>
    <name type="common">Mouse</name>
    <dbReference type="NCBI Taxonomy" id="10090"/>
    <lineage>
        <taxon>Eukaryota</taxon>
        <taxon>Metazoa</taxon>
        <taxon>Chordata</taxon>
        <taxon>Craniata</taxon>
        <taxon>Vertebrata</taxon>
        <taxon>Euteleostomi</taxon>
        <taxon>Mammalia</taxon>
        <taxon>Eutheria</taxon>
        <taxon>Euarchontoglires</taxon>
        <taxon>Glires</taxon>
        <taxon>Rodentia</taxon>
        <taxon>Myomorpha</taxon>
        <taxon>Muroidea</taxon>
        <taxon>Muridae</taxon>
        <taxon>Murinae</taxon>
        <taxon>Mus</taxon>
        <taxon>Mus</taxon>
    </lineage>
</organism>
<gene>
    <name type="primary">Flt3</name>
    <name type="synonym">Flk-2</name>
    <name type="synonym">Flt-3</name>
</gene>
<dbReference type="EC" id="2.7.10.1"/>
<dbReference type="EMBL" id="M64689">
    <property type="protein sequence ID" value="AAA37634.1"/>
    <property type="molecule type" value="mRNA"/>
</dbReference>
<dbReference type="EMBL" id="X59398">
    <property type="protein sequence ID" value="CAA42041.1"/>
    <property type="molecule type" value="mRNA"/>
</dbReference>
<dbReference type="CCDS" id="CCDS39400.1"/>
<dbReference type="PIR" id="A39931">
    <property type="entry name" value="A39931"/>
</dbReference>
<dbReference type="PIR" id="S18827">
    <property type="entry name" value="S18827"/>
</dbReference>
<dbReference type="RefSeq" id="NP_034359.2">
    <property type="nucleotide sequence ID" value="NM_010229.2"/>
</dbReference>
<dbReference type="SMR" id="Q00342"/>
<dbReference type="BioGRID" id="199707">
    <property type="interactions" value="3"/>
</dbReference>
<dbReference type="FunCoup" id="Q00342">
    <property type="interactions" value="844"/>
</dbReference>
<dbReference type="STRING" id="10090.ENSMUSP00000039041"/>
<dbReference type="BindingDB" id="Q00342"/>
<dbReference type="ChEMBL" id="CHEMBL2034796"/>
<dbReference type="GlyCosmos" id="Q00342">
    <property type="glycosylation" value="10 sites, No reported glycans"/>
</dbReference>
<dbReference type="GlyGen" id="Q00342">
    <property type="glycosylation" value="13 sites, 6 N-linked glycans (6 sites)"/>
</dbReference>
<dbReference type="iPTMnet" id="Q00342"/>
<dbReference type="PhosphoSitePlus" id="Q00342"/>
<dbReference type="SwissPalm" id="Q00342"/>
<dbReference type="PaxDb" id="10090-ENSMUSP00000039041"/>
<dbReference type="ProteomicsDB" id="266854"/>
<dbReference type="DNASU" id="14255"/>
<dbReference type="GeneID" id="14255"/>
<dbReference type="KEGG" id="mmu:14255"/>
<dbReference type="AGR" id="MGI:95559"/>
<dbReference type="CTD" id="2322"/>
<dbReference type="MGI" id="MGI:95559">
    <property type="gene designation" value="Flt3"/>
</dbReference>
<dbReference type="eggNOG" id="KOG0200">
    <property type="taxonomic scope" value="Eukaryota"/>
</dbReference>
<dbReference type="InParanoid" id="Q00342"/>
<dbReference type="OrthoDB" id="6077854at2759"/>
<dbReference type="BRENDA" id="2.7.10.1">
    <property type="organism ID" value="3474"/>
</dbReference>
<dbReference type="Reactome" id="R-MMU-109704">
    <property type="pathway name" value="PI3K Cascade"/>
</dbReference>
<dbReference type="Reactome" id="R-MMU-1257604">
    <property type="pathway name" value="PIP3 activates AKT signaling"/>
</dbReference>
<dbReference type="Reactome" id="R-MMU-5673001">
    <property type="pathway name" value="RAF/MAP kinase cascade"/>
</dbReference>
<dbReference type="Reactome" id="R-MMU-6811558">
    <property type="pathway name" value="PI5P, PP2A and IER3 Regulate PI3K/AKT Signaling"/>
</dbReference>
<dbReference type="Reactome" id="R-MMU-9607240">
    <property type="pathway name" value="FLT3 Signaling"/>
</dbReference>
<dbReference type="Reactome" id="R-MMU-9706369">
    <property type="pathway name" value="Negative regulation of FLT3"/>
</dbReference>
<dbReference type="Reactome" id="R-MMU-9706374">
    <property type="pathway name" value="FLT3 signaling through SRC family kinases"/>
</dbReference>
<dbReference type="BioGRID-ORCS" id="14255">
    <property type="hits" value="5 hits in 80 CRISPR screens"/>
</dbReference>
<dbReference type="ChiTaRS" id="Flt3">
    <property type="organism name" value="mouse"/>
</dbReference>
<dbReference type="PRO" id="PR:Q00342"/>
<dbReference type="Proteomes" id="UP000000589">
    <property type="component" value="Unplaced"/>
</dbReference>
<dbReference type="RNAct" id="Q00342">
    <property type="molecule type" value="protein"/>
</dbReference>
<dbReference type="GO" id="GO:0009986">
    <property type="term" value="C:cell surface"/>
    <property type="evidence" value="ECO:0000314"/>
    <property type="project" value="MGI"/>
</dbReference>
<dbReference type="GO" id="GO:0005788">
    <property type="term" value="C:endoplasmic reticulum lumen"/>
    <property type="evidence" value="ECO:0007669"/>
    <property type="project" value="UniProtKB-SubCell"/>
</dbReference>
<dbReference type="GO" id="GO:0009897">
    <property type="term" value="C:external side of plasma membrane"/>
    <property type="evidence" value="ECO:0000314"/>
    <property type="project" value="MGI"/>
</dbReference>
<dbReference type="GO" id="GO:0005886">
    <property type="term" value="C:plasma membrane"/>
    <property type="evidence" value="ECO:0000304"/>
    <property type="project" value="Reactome"/>
</dbReference>
<dbReference type="GO" id="GO:0005524">
    <property type="term" value="F:ATP binding"/>
    <property type="evidence" value="ECO:0007669"/>
    <property type="project" value="UniProtKB-KW"/>
</dbReference>
<dbReference type="GO" id="GO:0004896">
    <property type="term" value="F:cytokine receptor activity"/>
    <property type="evidence" value="ECO:0000315"/>
    <property type="project" value="UniProtKB"/>
</dbReference>
<dbReference type="GO" id="GO:0043548">
    <property type="term" value="F:phosphatidylinositol 3-kinase binding"/>
    <property type="evidence" value="ECO:0000314"/>
    <property type="project" value="MGI"/>
</dbReference>
<dbReference type="GO" id="GO:0004713">
    <property type="term" value="F:protein tyrosine kinase activity"/>
    <property type="evidence" value="ECO:0000314"/>
    <property type="project" value="MGI"/>
</dbReference>
<dbReference type="GO" id="GO:0004714">
    <property type="term" value="F:transmembrane receptor protein tyrosine kinase activity"/>
    <property type="evidence" value="ECO:0007669"/>
    <property type="project" value="UniProtKB-EC"/>
</dbReference>
<dbReference type="GO" id="GO:0031625">
    <property type="term" value="F:ubiquitin protein ligase binding"/>
    <property type="evidence" value="ECO:0000353"/>
    <property type="project" value="UniProtKB"/>
</dbReference>
<dbReference type="GO" id="GO:0019882">
    <property type="term" value="P:antigen processing and presentation"/>
    <property type="evidence" value="ECO:0000315"/>
    <property type="project" value="MGI"/>
</dbReference>
<dbReference type="GO" id="GO:0030183">
    <property type="term" value="P:B cell differentiation"/>
    <property type="evidence" value="ECO:0000315"/>
    <property type="project" value="UniProtKB"/>
</dbReference>
<dbReference type="GO" id="GO:0008283">
    <property type="term" value="P:cell population proliferation"/>
    <property type="evidence" value="ECO:0000315"/>
    <property type="project" value="MGI"/>
</dbReference>
<dbReference type="GO" id="GO:0007169">
    <property type="term" value="P:cell surface receptor protein tyrosine kinase signaling pathway"/>
    <property type="evidence" value="ECO:0007669"/>
    <property type="project" value="InterPro"/>
</dbReference>
<dbReference type="GO" id="GO:0071345">
    <property type="term" value="P:cellular response to cytokine stimulus"/>
    <property type="evidence" value="ECO:0000315"/>
    <property type="project" value="UniProtKB"/>
</dbReference>
<dbReference type="GO" id="GO:0098586">
    <property type="term" value="P:cellular response to virus"/>
    <property type="evidence" value="ECO:0000315"/>
    <property type="project" value="MGI"/>
</dbReference>
<dbReference type="GO" id="GO:0035726">
    <property type="term" value="P:common myeloid progenitor cell proliferation"/>
    <property type="evidence" value="ECO:0000315"/>
    <property type="project" value="UniProtKB"/>
</dbReference>
<dbReference type="GO" id="GO:0019221">
    <property type="term" value="P:cytokine-mediated signaling pathway"/>
    <property type="evidence" value="ECO:0000315"/>
    <property type="project" value="UniProtKB"/>
</dbReference>
<dbReference type="GO" id="GO:0097028">
    <property type="term" value="P:dendritic cell differentiation"/>
    <property type="evidence" value="ECO:0000315"/>
    <property type="project" value="UniProtKB"/>
</dbReference>
<dbReference type="GO" id="GO:0036145">
    <property type="term" value="P:dendritic cell homeostasis"/>
    <property type="evidence" value="ECO:0000315"/>
    <property type="project" value="MGI"/>
</dbReference>
<dbReference type="GO" id="GO:0030097">
    <property type="term" value="P:hemopoiesis"/>
    <property type="evidence" value="ECO:0000266"/>
    <property type="project" value="MGI"/>
</dbReference>
<dbReference type="GO" id="GO:0048873">
    <property type="term" value="P:homeostasis of number of cells within a tissue"/>
    <property type="evidence" value="ECO:0000315"/>
    <property type="project" value="MGI"/>
</dbReference>
<dbReference type="GO" id="GO:0001776">
    <property type="term" value="P:leukocyte homeostasis"/>
    <property type="evidence" value="ECO:0000315"/>
    <property type="project" value="UniProtKB"/>
</dbReference>
<dbReference type="GO" id="GO:0048535">
    <property type="term" value="P:lymph node development"/>
    <property type="evidence" value="ECO:0000315"/>
    <property type="project" value="MGI"/>
</dbReference>
<dbReference type="GO" id="GO:0030098">
    <property type="term" value="P:lymphocyte differentiation"/>
    <property type="evidence" value="ECO:0000314"/>
    <property type="project" value="MGI"/>
</dbReference>
<dbReference type="GO" id="GO:0046651">
    <property type="term" value="P:lymphocyte proliferation"/>
    <property type="evidence" value="ECO:0000315"/>
    <property type="project" value="UniProtKB"/>
</dbReference>
<dbReference type="GO" id="GO:0002320">
    <property type="term" value="P:lymphoid progenitor cell differentiation"/>
    <property type="evidence" value="ECO:0000316"/>
    <property type="project" value="MGI"/>
</dbReference>
<dbReference type="GO" id="GO:0002318">
    <property type="term" value="P:myeloid progenitor cell differentiation"/>
    <property type="evidence" value="ECO:0000315"/>
    <property type="project" value="UniProtKB"/>
</dbReference>
<dbReference type="GO" id="GO:0045578">
    <property type="term" value="P:negative regulation of B cell differentiation"/>
    <property type="evidence" value="ECO:0000314"/>
    <property type="project" value="MGI"/>
</dbReference>
<dbReference type="GO" id="GO:0008285">
    <property type="term" value="P:negative regulation of cell population proliferation"/>
    <property type="evidence" value="ECO:0000315"/>
    <property type="project" value="MGI"/>
</dbReference>
<dbReference type="GO" id="GO:0032715">
    <property type="term" value="P:negative regulation of interleukin-6 production"/>
    <property type="evidence" value="ECO:0000315"/>
    <property type="project" value="MGI"/>
</dbReference>
<dbReference type="GO" id="GO:0032720">
    <property type="term" value="P:negative regulation of tumor necrosis factor production"/>
    <property type="evidence" value="ECO:0000315"/>
    <property type="project" value="MGI"/>
</dbReference>
<dbReference type="GO" id="GO:0032727">
    <property type="term" value="P:positive regulation of interferon-alpha production"/>
    <property type="evidence" value="ECO:0000315"/>
    <property type="project" value="MGI"/>
</dbReference>
<dbReference type="GO" id="GO:0032735">
    <property type="term" value="P:positive regulation of interleukin-12 production"/>
    <property type="evidence" value="ECO:0000315"/>
    <property type="project" value="MGI"/>
</dbReference>
<dbReference type="GO" id="GO:0040018">
    <property type="term" value="P:positive regulation of multicellular organism growth"/>
    <property type="evidence" value="ECO:0000315"/>
    <property type="project" value="MGI"/>
</dbReference>
<dbReference type="GO" id="GO:0032729">
    <property type="term" value="P:positive regulation of type II interferon production"/>
    <property type="evidence" value="ECO:0000315"/>
    <property type="project" value="MGI"/>
</dbReference>
<dbReference type="GO" id="GO:0009791">
    <property type="term" value="P:post-embryonic development"/>
    <property type="evidence" value="ECO:0000316"/>
    <property type="project" value="MGI"/>
</dbReference>
<dbReference type="GO" id="GO:0002328">
    <property type="term" value="P:pro-B cell differentiation"/>
    <property type="evidence" value="ECO:0000315"/>
    <property type="project" value="UniProtKB"/>
</dbReference>
<dbReference type="GO" id="GO:0002572">
    <property type="term" value="P:pro-T cell differentiation"/>
    <property type="evidence" value="ECO:0000315"/>
    <property type="project" value="MGI"/>
</dbReference>
<dbReference type="GO" id="GO:0048536">
    <property type="term" value="P:spleen development"/>
    <property type="evidence" value="ECO:0000316"/>
    <property type="project" value="MGI"/>
</dbReference>
<dbReference type="FunFam" id="2.60.40.10:FF:001159">
    <property type="entry name" value="Fms related tyrosine kinase 3"/>
    <property type="match status" value="1"/>
</dbReference>
<dbReference type="FunFam" id="1.10.510.10:FF:000426">
    <property type="entry name" value="Receptor-type tyrosine-protein kinase FLT3"/>
    <property type="match status" value="1"/>
</dbReference>
<dbReference type="FunFam" id="2.60.40.10:FF:000661">
    <property type="entry name" value="receptor-type tyrosine-protein kinase FLT3"/>
    <property type="match status" value="1"/>
</dbReference>
<dbReference type="FunFam" id="3.30.200.20:FF:000366">
    <property type="entry name" value="receptor-type tyrosine-protein kinase FLT3"/>
    <property type="match status" value="1"/>
</dbReference>
<dbReference type="Gene3D" id="2.60.40.10">
    <property type="entry name" value="Immunoglobulins"/>
    <property type="match status" value="2"/>
</dbReference>
<dbReference type="Gene3D" id="3.30.200.20">
    <property type="entry name" value="Phosphorylase Kinase, domain 1"/>
    <property type="match status" value="1"/>
</dbReference>
<dbReference type="Gene3D" id="1.10.510.10">
    <property type="entry name" value="Transferase(Phosphotransferase) domain 1"/>
    <property type="match status" value="1"/>
</dbReference>
<dbReference type="InterPro" id="IPR007110">
    <property type="entry name" value="Ig-like_dom"/>
</dbReference>
<dbReference type="InterPro" id="IPR036179">
    <property type="entry name" value="Ig-like_dom_sf"/>
</dbReference>
<dbReference type="InterPro" id="IPR013783">
    <property type="entry name" value="Ig-like_fold"/>
</dbReference>
<dbReference type="InterPro" id="IPR003599">
    <property type="entry name" value="Ig_sub"/>
</dbReference>
<dbReference type="InterPro" id="IPR013151">
    <property type="entry name" value="Immunoglobulin_dom"/>
</dbReference>
<dbReference type="InterPro" id="IPR011009">
    <property type="entry name" value="Kinase-like_dom_sf"/>
</dbReference>
<dbReference type="InterPro" id="IPR000719">
    <property type="entry name" value="Prot_kinase_dom"/>
</dbReference>
<dbReference type="InterPro" id="IPR017441">
    <property type="entry name" value="Protein_kinase_ATP_BS"/>
</dbReference>
<dbReference type="InterPro" id="IPR050122">
    <property type="entry name" value="RTK"/>
</dbReference>
<dbReference type="InterPro" id="IPR001245">
    <property type="entry name" value="Ser-Thr/Tyr_kinase_cat_dom"/>
</dbReference>
<dbReference type="InterPro" id="IPR008266">
    <property type="entry name" value="Tyr_kinase_AS"/>
</dbReference>
<dbReference type="InterPro" id="IPR020635">
    <property type="entry name" value="Tyr_kinase_cat_dom"/>
</dbReference>
<dbReference type="InterPro" id="IPR001824">
    <property type="entry name" value="Tyr_kinase_rcpt_3_CS"/>
</dbReference>
<dbReference type="PANTHER" id="PTHR24416:SF356">
    <property type="entry name" value="RECEPTOR-TYPE TYROSINE-PROTEIN KINASE FLT3"/>
    <property type="match status" value="1"/>
</dbReference>
<dbReference type="PANTHER" id="PTHR24416">
    <property type="entry name" value="TYROSINE-PROTEIN KINASE RECEPTOR"/>
    <property type="match status" value="1"/>
</dbReference>
<dbReference type="Pfam" id="PF00047">
    <property type="entry name" value="ig"/>
    <property type="match status" value="1"/>
</dbReference>
<dbReference type="Pfam" id="PF07714">
    <property type="entry name" value="PK_Tyr_Ser-Thr"/>
    <property type="match status" value="1"/>
</dbReference>
<dbReference type="PIRSF" id="PIRSF000615">
    <property type="entry name" value="TyrPK_CSF1-R"/>
    <property type="match status" value="1"/>
</dbReference>
<dbReference type="SMART" id="SM00409">
    <property type="entry name" value="IG"/>
    <property type="match status" value="2"/>
</dbReference>
<dbReference type="SMART" id="SM00219">
    <property type="entry name" value="TyrKc"/>
    <property type="match status" value="1"/>
</dbReference>
<dbReference type="SUPFAM" id="SSF48726">
    <property type="entry name" value="Immunoglobulin"/>
    <property type="match status" value="2"/>
</dbReference>
<dbReference type="SUPFAM" id="SSF56112">
    <property type="entry name" value="Protein kinase-like (PK-like)"/>
    <property type="match status" value="1"/>
</dbReference>
<dbReference type="PROSITE" id="PS50835">
    <property type="entry name" value="IG_LIKE"/>
    <property type="match status" value="1"/>
</dbReference>
<dbReference type="PROSITE" id="PS00107">
    <property type="entry name" value="PROTEIN_KINASE_ATP"/>
    <property type="match status" value="1"/>
</dbReference>
<dbReference type="PROSITE" id="PS50011">
    <property type="entry name" value="PROTEIN_KINASE_DOM"/>
    <property type="match status" value="1"/>
</dbReference>
<dbReference type="PROSITE" id="PS00109">
    <property type="entry name" value="PROTEIN_KINASE_TYR"/>
    <property type="match status" value="1"/>
</dbReference>
<dbReference type="PROSITE" id="PS00240">
    <property type="entry name" value="RECEPTOR_TYR_KIN_III"/>
    <property type="match status" value="1"/>
</dbReference>
<sequence length="1000" mass="113496">MRALAQRSDRRLLLLVVLSVMILETVTNQDLPVIKCVLISHENNGSSAGKPSSYRMVRGSPEDLQCTPRRQSEGTVYEAATVEVAESGSITLQVQLATPGDLSCLWVFKHSSLGCQPHFDLQNRGIVSMAILNVTETQAGEYLLHIQSEAANYTVLFTVNVRDTQLYVLRRPYFRKMENQDALLCISEGVPEPTVEWVLCSSHRESCKEEGPAVVRKEEKVLHELFGTDIRCCARNALGRESTKLFTIDLNQAPQSTLPQLFLKVGEPLWIRCKAIHVNHGFGLTWELEDKALEEGSYFEMSTYSTNRTMIRILLAFVSSVGRNDTGYYTCSSSKHPSQSALVTILEKGFINATSSQEEYEIDPYEKFCFSVRFKAYPRIRCTWIFSQASFPCEQRGLEDGYSISKFCDHKNKPGEYIFYAENDDAQFTKMFTLNIRKKPQVLANASASQASCSSDGYPLPSWTWKKCSDKSPNCTEEIPEGVWNKKANRKVFGQWVSSSTLNMSEAGKGLLVKCCAYNSMGTSCETIFLNSPGPFPFIQDNISFYATIGLCLPFIVVLIVLICHKYKKQFRYESQLQMIQVTGPLDNEYFYVDFRDYEYDLKWEFPRENLEFGKVLGSGAFGRVMNATAYGISKTGVSIQVAVKMLKEKADSCEKEALMSELKMMTHLGHHDNIVNLLGACTLSGPVYLIFEYCCYGDLLNYLRSKREKFHRTWTEIFKEHNFSFYPTFQAHSNSSMPGSREVQLHPPLDQLSGFNGNSIHSEDEIEYENQKRLAEEEEEDLNVLTFEDLLCFAYQVAKGMEFLEFKSCVHRDLAARNVLVTHGKVVKICDFGLARDILSDSSYVVRGNARLPVKWMAPESLFEGIYTIKSDVWSYGILLWEIFSLGVNPYPGIPVDANFYKLIQSGFKMEQPFYATEGIYFVMQSCWAFDSRKRPSFPNLTSFLGCQLAEAEEAMYQNMGGNVPEHPSIYQNRRPLSREAGSEPPSPQAQVKIHRERS</sequence>
<comment type="function">
    <text evidence="9 10 11 12 15">Tyrosine-protein kinase that acts as a cell-surface receptor for the cytokine FLT3LG and regulates differentiation, proliferation and survival of hematopoietic progenitor cells and of dendritic cells. Promotes phosphorylation of SHC1 and AKT1, and activation of the downstream effector MTOR. Promotes activation of RAS signaling and phosphorylation of downstream kinases, including MAPK1/ERK2 and/or MAPK3/ERK1. Promotes phosphorylation of FES, FER, PTPN6/SHP, PTPN11/SHP-2, PLCG1, and STAT5A and/or STAT5B. Activation of wild-type FLT3 causes only marginal activation of STAT5A or STAT5B. Mutations that cause constitutive kinase activity promote cell proliferation and resistance to apoptosis via the activation of multiple signaling pathways.</text>
</comment>
<comment type="catalytic activity">
    <reaction evidence="6 12">
        <text>L-tyrosyl-[protein] + ATP = O-phospho-L-tyrosyl-[protein] + ADP + H(+)</text>
        <dbReference type="Rhea" id="RHEA:10596"/>
        <dbReference type="Rhea" id="RHEA-COMP:10136"/>
        <dbReference type="Rhea" id="RHEA-COMP:20101"/>
        <dbReference type="ChEBI" id="CHEBI:15378"/>
        <dbReference type="ChEBI" id="CHEBI:30616"/>
        <dbReference type="ChEBI" id="CHEBI:46858"/>
        <dbReference type="ChEBI" id="CHEBI:61978"/>
        <dbReference type="ChEBI" id="CHEBI:456216"/>
        <dbReference type="EC" id="2.7.10.1"/>
    </reaction>
</comment>
<comment type="activity regulation">
    <text evidence="12">Present in an inactive conformation in the absence of bound ligand. FLT3LG binding leads to dimerization and activation by autophosphorylation.</text>
</comment>
<comment type="subunit">
    <text evidence="2 13">Monomer in the absence of bound FLT3LG. Homodimer in the presence of bound FLT3LG. Interacts with FIZ1 following ligand activation. Interacts with FES, FER, LYN, FGR, HCK, SRC and GRB2. Interacts with PTPRJ/DEP-1 and PTPN11/SHP2 (By similarity). Interacts with RNF115 and RNF126.</text>
</comment>
<comment type="subcellular location">
    <subcellularLocation>
        <location>Membrane</location>
        <topology>Single-pass type I membrane protein</topology>
    </subcellularLocation>
    <subcellularLocation>
        <location evidence="1">Endoplasmic reticulum lumen</location>
    </subcellularLocation>
    <text evidence="1">Constitutively activated mutant forms with internal tandem duplications are less efficiently transported to the cell surface and a significant proportion is retained in an immature form in the endoplasmic reticulum lumen. The activated kinase is rapidly targeted for degradation (By similarity).</text>
</comment>
<comment type="tissue specificity">
    <text>Hematopoietic stem and progenitor cell-enriched populations. Found in brain, placenta and testis.</text>
</comment>
<comment type="domain">
    <text evidence="1">The juxtamembrane autoregulatory region is important for normal regulation of the kinase activity and for maintaining the kinase in an inactive state in the absence of bound ligand. Upon tyrosine phosphorylation, it mediates interaction with the SH2 domains of numerous signaling partners. In-frame internal tandem duplications (ITDs) result in constitutive activation of the kinase. The activity of the mutant kinase can be stimulated further by FLT3LG binding (By similarity).</text>
</comment>
<comment type="PTM">
    <text evidence="1">N-glycosylated, contains complex N-glycans with sialic acid.</text>
</comment>
<comment type="PTM">
    <text evidence="1">Autophosphorylated on several tyrosine residues in response to FLT3LG binding. FLT3LG binding also increases phosphorylation of mutant kinases that are constitutively activated. Dephosphorylated by PTPRJ/DEP-1, PTPN1, PTPN6/SHP-1, and to a lesser degree by PTPN12. Dephosphorylation is important for export from the endoplasmic reticulum and location at the cell membrane (By similarity).</text>
</comment>
<comment type="PTM">
    <text evidence="1">Rapidly ubiquitinated by UBE2L6 and the E3 ubiquitin-protein ligase SIAH1 after autophosphorylation, leading to its proteasomal degradation.</text>
</comment>
<comment type="disruption phenotype">
    <text evidence="14">No visible phenotype. Mice are born at the expected Mendelian rate, develop normally and are fertile. They show normal blood cell counts, excepting reduced levels of primitive B-cell progenitors. Mice lacking both Flt3 and Kit show a reduction in both lymphoid and myeloid cell lineages. They appear normal, but are born at a lower frequency than expected and exhibit severely reduced viability after 3 weeks, none surviving more than six weeks.</text>
</comment>
<comment type="similarity">
    <text evidence="5">Belongs to the protein kinase superfamily. Tyr protein kinase family. CSF-1/PDGF receptor subfamily.</text>
</comment>
<evidence type="ECO:0000250" key="1"/>
<evidence type="ECO:0000250" key="2">
    <source>
        <dbReference type="UniProtKB" id="P36888"/>
    </source>
</evidence>
<evidence type="ECO:0000255" key="3"/>
<evidence type="ECO:0000255" key="4">
    <source>
        <dbReference type="PROSITE-ProRule" id="PRU00114"/>
    </source>
</evidence>
<evidence type="ECO:0000255" key="5">
    <source>
        <dbReference type="PROSITE-ProRule" id="PRU00159"/>
    </source>
</evidence>
<evidence type="ECO:0000255" key="6">
    <source>
        <dbReference type="PROSITE-ProRule" id="PRU10028"/>
    </source>
</evidence>
<evidence type="ECO:0000256" key="7">
    <source>
        <dbReference type="SAM" id="MobiDB-lite"/>
    </source>
</evidence>
<evidence type="ECO:0000269" key="8">
    <source>
    </source>
</evidence>
<evidence type="ECO:0000269" key="9">
    <source>
    </source>
</evidence>
<evidence type="ECO:0000269" key="10">
    <source>
    </source>
</evidence>
<evidence type="ECO:0000269" key="11">
    <source>
    </source>
</evidence>
<evidence type="ECO:0000269" key="12">
    <source>
    </source>
</evidence>
<evidence type="ECO:0000269" key="13">
    <source>
    </source>
</evidence>
<evidence type="ECO:0000269" key="14">
    <source>
    </source>
</evidence>
<evidence type="ECO:0000269" key="15">
    <source>
    </source>
</evidence>
<evidence type="ECO:0000305" key="16"/>
<proteinExistence type="evidence at protein level"/>
<reference key="1">
    <citation type="journal article" date="1991" name="Cell">
        <title>A receptor tyrosine kinase specific to hematopoietic stem and progenitor cell-enriched populations.</title>
        <authorList>
            <person name="Matthews W."/>
            <person name="Jordan C.T."/>
            <person name="Wiegand G.W."/>
            <person name="Pardoll D."/>
            <person name="Lemischka I.R."/>
        </authorList>
    </citation>
    <scope>NUCLEOTIDE SEQUENCE [MRNA]</scope>
    <source>
        <tissue>Liver</tissue>
    </source>
</reference>
<reference key="2">
    <citation type="journal article" date="1991" name="Oncogene">
        <title>Murine Flt3, a gene encoding a novel tyrosine kinase receptor of the PDGFR/CSF1R family.</title>
        <authorList>
            <person name="Rosnet O."/>
            <person name="Marchetto S."/>
            <person name="Delapeyriere O."/>
            <person name="Birnbaum D."/>
        </authorList>
    </citation>
    <scope>NUCLEOTIDE SEQUENCE [MRNA]</scope>
</reference>
<reference key="3">
    <citation type="journal article" date="1993" name="Oncogene">
        <title>Biochemical characterization and analysis of the transforming potential of the FLT3/FLK2 receptor tyrosine kinase.</title>
        <authorList>
            <person name="Maroc N."/>
            <person name="Rottapel R."/>
            <person name="Rosnet O."/>
            <person name="Marchetto S."/>
            <person name="Lavezzi C."/>
            <person name="Mannoni P."/>
            <person name="Birnbaum D."/>
            <person name="Dubreuil P."/>
        </authorList>
    </citation>
    <scope>CHARACTERIZATION</scope>
</reference>
<reference key="4">
    <citation type="journal article" date="1995" name="Immunity">
        <title>Targeted disruption of the flk2/flt3 gene leads to deficiencies in primitive hematopoietic progenitors.</title>
        <authorList>
            <person name="Mackarehtschian K."/>
            <person name="Hardin J.D."/>
            <person name="Moore K.A."/>
            <person name="Boast S."/>
            <person name="Goff S.P."/>
            <person name="Lemischka I.R."/>
        </authorList>
    </citation>
    <scope>DISRUPTION PHENOTYPE</scope>
</reference>
<reference key="5">
    <citation type="journal article" date="1996" name="J. Exp. Med.">
        <title>Dramatic increase in the numbers of functionally mature dendritic cells in Flt3 ligand-treated mice: multiple dendritic cell subpopulations identified.</title>
        <authorList>
            <person name="Maraskovsky E."/>
            <person name="Brasel K."/>
            <person name="Teepe M."/>
            <person name="Roux E.R."/>
            <person name="Lyman S.D."/>
            <person name="Shortman K."/>
            <person name="McKenna H.J."/>
        </authorList>
    </citation>
    <scope>FUNCTION IN REGULATION OF DENDRITIC CELL DEVELOPMENT</scope>
</reference>
<reference key="6">
    <citation type="journal article" date="1999" name="J. Biol. Chem.">
        <title>Fiz1, a novel zinc finger protein interacting with the receptor tyrosine kinase Flt3.</title>
        <authorList>
            <person name="Wolf I."/>
            <person name="Rohrschneider L.R."/>
        </authorList>
    </citation>
    <scope>INTERACTION WITH FIZ1</scope>
    <scope>MUTAGENESIS OF LYS-645</scope>
</reference>
<reference key="7">
    <citation type="journal article" date="2008" name="Nat. Immunol.">
        <title>The receptor tyrosine kinase Flt3 is required for dendritic cell development in peripheral lymphoid tissues.</title>
        <authorList>
            <person name="Waskow C."/>
            <person name="Liu K."/>
            <person name="Darrasse-Jeze G."/>
            <person name="Guermonprez P."/>
            <person name="Ginhoux F."/>
            <person name="Merad M."/>
            <person name="Shengelia T."/>
            <person name="Yao K."/>
            <person name="Nussenzweig M."/>
        </authorList>
    </citation>
    <scope>FUNCTION</scope>
</reference>
<reference key="8">
    <citation type="journal article" date="2009" name="Science">
        <title>In vivo analysis of dendritic cell development and homeostasis.</title>
        <authorList>
            <person name="Liu K."/>
            <person name="Victora G.D."/>
            <person name="Schwickert T.A."/>
            <person name="Guermonprez P."/>
            <person name="Meredith M.M."/>
            <person name="Yao K."/>
            <person name="Chu F.F."/>
            <person name="Randolph G.J."/>
            <person name="Rudensky A.Y."/>
            <person name="Nussenzweig M."/>
        </authorList>
    </citation>
    <scope>FUNCTION</scope>
</reference>
<reference key="9">
    <citation type="journal article" date="2010" name="Proc. Natl. Acad. Sci. U.S.A.">
        <title>Flt3 permits survival during infection by rendering dendritic cells competent to activate NK cells.</title>
        <authorList>
            <person name="Eidenschenk C."/>
            <person name="Crozat K."/>
            <person name="Krebs P."/>
            <person name="Arens R."/>
            <person name="Popkin D."/>
            <person name="Arnold C.N."/>
            <person name="Blasius A.L."/>
            <person name="Benedict C.A."/>
            <person name="Moresco E.M."/>
            <person name="Xia Y."/>
            <person name="Beutler B."/>
        </authorList>
    </citation>
    <scope>FUNCTION IN REGULATION OF DENDRITIC CELL DEVELOPMENT</scope>
</reference>
<reference key="10">
    <citation type="journal article" date="2011" name="Oncogene">
        <title>Further activation of FLT3 mutants by FLT3 ligand.</title>
        <authorList>
            <person name="Zheng R."/>
            <person name="Bailey E."/>
            <person name="Nguyen B."/>
            <person name="Yang X."/>
            <person name="Piloto O."/>
            <person name="Levis M."/>
            <person name="Small D."/>
        </authorList>
    </citation>
    <scope>FUNCTION</scope>
    <scope>CATALYTIC ACTIVITY</scope>
    <scope>AUTOPHOSPHORYLATION</scope>
    <scope>DOMAIN</scope>
    <scope>ACTIVITY REGULATION</scope>
</reference>
<reference key="11">
    <citation type="journal article" date="2013" name="J. Cell Sci.">
        <title>The E3 ubiquitin ligases RNF126 and Rabring7 regulate endosomal sorting of the epidermal growth factor receptor.</title>
        <authorList>
            <person name="Smith C.J."/>
            <person name="Berry D.M."/>
            <person name="McGlade C.J."/>
        </authorList>
    </citation>
    <scope>INTERACTION WITH RNF115 AND RNF126</scope>
</reference>